<accession>Q47LL0</accession>
<reference key="1">
    <citation type="journal article" date="2007" name="J. Bacteriol.">
        <title>Genome sequence and analysis of the soil cellulolytic actinomycete Thermobifida fusca YX.</title>
        <authorList>
            <person name="Lykidis A."/>
            <person name="Mavromatis K."/>
            <person name="Ivanova N."/>
            <person name="Anderson I."/>
            <person name="Land M."/>
            <person name="DiBartolo G."/>
            <person name="Martinez M."/>
            <person name="Lapidus A."/>
            <person name="Lucas S."/>
            <person name="Copeland A."/>
            <person name="Richardson P."/>
            <person name="Wilson D.B."/>
            <person name="Kyrpides N."/>
        </authorList>
    </citation>
    <scope>NUCLEOTIDE SEQUENCE [LARGE SCALE GENOMIC DNA]</scope>
    <source>
        <strain>YX</strain>
    </source>
</reference>
<keyword id="KW-0687">Ribonucleoprotein</keyword>
<keyword id="KW-0689">Ribosomal protein</keyword>
<keyword id="KW-0694">RNA-binding</keyword>
<keyword id="KW-0699">rRNA-binding</keyword>
<dbReference type="EMBL" id="CP000088">
    <property type="protein sequence ID" value="AAZ56662.1"/>
    <property type="molecule type" value="Genomic_DNA"/>
</dbReference>
<dbReference type="RefSeq" id="WP_011293052.1">
    <property type="nucleotide sequence ID" value="NC_007333.1"/>
</dbReference>
<dbReference type="SMR" id="Q47LL0"/>
<dbReference type="STRING" id="269800.Tfu_2629"/>
<dbReference type="KEGG" id="tfu:Tfu_2629"/>
<dbReference type="eggNOG" id="COG0098">
    <property type="taxonomic scope" value="Bacteria"/>
</dbReference>
<dbReference type="HOGENOM" id="CLU_065898_1_2_11"/>
<dbReference type="OrthoDB" id="9809045at2"/>
<dbReference type="GO" id="GO:0015935">
    <property type="term" value="C:small ribosomal subunit"/>
    <property type="evidence" value="ECO:0007669"/>
    <property type="project" value="InterPro"/>
</dbReference>
<dbReference type="GO" id="GO:0019843">
    <property type="term" value="F:rRNA binding"/>
    <property type="evidence" value="ECO:0007669"/>
    <property type="project" value="UniProtKB-UniRule"/>
</dbReference>
<dbReference type="GO" id="GO:0003735">
    <property type="term" value="F:structural constituent of ribosome"/>
    <property type="evidence" value="ECO:0007669"/>
    <property type="project" value="InterPro"/>
</dbReference>
<dbReference type="GO" id="GO:0006412">
    <property type="term" value="P:translation"/>
    <property type="evidence" value="ECO:0007669"/>
    <property type="project" value="UniProtKB-UniRule"/>
</dbReference>
<dbReference type="FunFam" id="3.30.160.20:FF:000001">
    <property type="entry name" value="30S ribosomal protein S5"/>
    <property type="match status" value="1"/>
</dbReference>
<dbReference type="FunFam" id="3.30.230.10:FF:000002">
    <property type="entry name" value="30S ribosomal protein S5"/>
    <property type="match status" value="1"/>
</dbReference>
<dbReference type="Gene3D" id="3.30.160.20">
    <property type="match status" value="1"/>
</dbReference>
<dbReference type="Gene3D" id="3.30.230.10">
    <property type="match status" value="1"/>
</dbReference>
<dbReference type="HAMAP" id="MF_01307_B">
    <property type="entry name" value="Ribosomal_uS5_B"/>
    <property type="match status" value="1"/>
</dbReference>
<dbReference type="InterPro" id="IPR020568">
    <property type="entry name" value="Ribosomal_Su5_D2-typ_SF"/>
</dbReference>
<dbReference type="InterPro" id="IPR000851">
    <property type="entry name" value="Ribosomal_uS5"/>
</dbReference>
<dbReference type="InterPro" id="IPR005712">
    <property type="entry name" value="Ribosomal_uS5_bac-type"/>
</dbReference>
<dbReference type="InterPro" id="IPR005324">
    <property type="entry name" value="Ribosomal_uS5_C"/>
</dbReference>
<dbReference type="InterPro" id="IPR013810">
    <property type="entry name" value="Ribosomal_uS5_N"/>
</dbReference>
<dbReference type="InterPro" id="IPR018192">
    <property type="entry name" value="Ribosomal_uS5_N_CS"/>
</dbReference>
<dbReference type="InterPro" id="IPR014721">
    <property type="entry name" value="Ribsml_uS5_D2-typ_fold_subgr"/>
</dbReference>
<dbReference type="NCBIfam" id="TIGR01021">
    <property type="entry name" value="rpsE_bact"/>
    <property type="match status" value="1"/>
</dbReference>
<dbReference type="PANTHER" id="PTHR48277">
    <property type="entry name" value="MITOCHONDRIAL RIBOSOMAL PROTEIN S5"/>
    <property type="match status" value="1"/>
</dbReference>
<dbReference type="PANTHER" id="PTHR48277:SF1">
    <property type="entry name" value="MITOCHONDRIAL RIBOSOMAL PROTEIN S5"/>
    <property type="match status" value="1"/>
</dbReference>
<dbReference type="Pfam" id="PF00333">
    <property type="entry name" value="Ribosomal_S5"/>
    <property type="match status" value="1"/>
</dbReference>
<dbReference type="Pfam" id="PF03719">
    <property type="entry name" value="Ribosomal_S5_C"/>
    <property type="match status" value="1"/>
</dbReference>
<dbReference type="SUPFAM" id="SSF54768">
    <property type="entry name" value="dsRNA-binding domain-like"/>
    <property type="match status" value="1"/>
</dbReference>
<dbReference type="SUPFAM" id="SSF54211">
    <property type="entry name" value="Ribosomal protein S5 domain 2-like"/>
    <property type="match status" value="1"/>
</dbReference>
<dbReference type="PROSITE" id="PS00585">
    <property type="entry name" value="RIBOSOMAL_S5"/>
    <property type="match status" value="1"/>
</dbReference>
<dbReference type="PROSITE" id="PS50881">
    <property type="entry name" value="S5_DSRBD"/>
    <property type="match status" value="1"/>
</dbReference>
<proteinExistence type="inferred from homology"/>
<name>RS5_THEFY</name>
<sequence length="200" mass="20644">MAAAPRRGAGGERRSGRDDRRGGSADKGVSYIERVVKINRVAKVVKGGRRFSFTALVVVGDGNGMVGVGYGKAKEVPAAIAKGVEEAKKNFFRVPRIGGTIVHQVQGEDAAGVVLLRPAAPGTGVIAGGPVRAVLECAGIHDVLTKSLGSSNPINIVRATVAALKSLSRPEEIAARRGLPLEDVVPAPMLRARAEAKAGV</sequence>
<organism>
    <name type="scientific">Thermobifida fusca (strain YX)</name>
    <dbReference type="NCBI Taxonomy" id="269800"/>
    <lineage>
        <taxon>Bacteria</taxon>
        <taxon>Bacillati</taxon>
        <taxon>Actinomycetota</taxon>
        <taxon>Actinomycetes</taxon>
        <taxon>Streptosporangiales</taxon>
        <taxon>Nocardiopsidaceae</taxon>
        <taxon>Thermobifida</taxon>
    </lineage>
</organism>
<evidence type="ECO:0000255" key="1">
    <source>
        <dbReference type="HAMAP-Rule" id="MF_01307"/>
    </source>
</evidence>
<evidence type="ECO:0000256" key="2">
    <source>
        <dbReference type="SAM" id="MobiDB-lite"/>
    </source>
</evidence>
<evidence type="ECO:0000305" key="3"/>
<comment type="function">
    <text evidence="1">With S4 and S12 plays an important role in translational accuracy.</text>
</comment>
<comment type="function">
    <text evidence="1">Located at the back of the 30S subunit body where it stabilizes the conformation of the head with respect to the body.</text>
</comment>
<comment type="subunit">
    <text evidence="1">Part of the 30S ribosomal subunit. Contacts proteins S4 and S8.</text>
</comment>
<comment type="domain">
    <text>The N-terminal domain interacts with the head of the 30S subunit; the C-terminal domain interacts with the body and contacts protein S4. The interaction surface between S4 and S5 is involved in control of translational fidelity.</text>
</comment>
<comment type="similarity">
    <text evidence="1">Belongs to the universal ribosomal protein uS5 family.</text>
</comment>
<gene>
    <name evidence="1" type="primary">rpsE</name>
    <name type="ordered locus">Tfu_2629</name>
</gene>
<feature type="chain" id="PRO_0000230376" description="Small ribosomal subunit protein uS5">
    <location>
        <begin position="1"/>
        <end position="200"/>
    </location>
</feature>
<feature type="domain" description="S5 DRBM" evidence="1">
    <location>
        <begin position="31"/>
        <end position="94"/>
    </location>
</feature>
<feature type="region of interest" description="Disordered" evidence="2">
    <location>
        <begin position="1"/>
        <end position="25"/>
    </location>
</feature>
<feature type="compositionally biased region" description="Basic and acidic residues" evidence="2">
    <location>
        <begin position="9"/>
        <end position="24"/>
    </location>
</feature>
<protein>
    <recommendedName>
        <fullName evidence="1">Small ribosomal subunit protein uS5</fullName>
    </recommendedName>
    <alternativeName>
        <fullName evidence="3">30S ribosomal protein S5</fullName>
    </alternativeName>
</protein>